<accession>A5IYK5</accession>
<organism>
    <name type="scientific">Mycoplasmopsis agalactiae (strain NCTC 10123 / CIP 59.7 / PG2)</name>
    <name type="common">Mycoplasma agalactiae</name>
    <dbReference type="NCBI Taxonomy" id="347257"/>
    <lineage>
        <taxon>Bacteria</taxon>
        <taxon>Bacillati</taxon>
        <taxon>Mycoplasmatota</taxon>
        <taxon>Mycoplasmoidales</taxon>
        <taxon>Metamycoplasmataceae</taxon>
        <taxon>Mycoplasmopsis</taxon>
    </lineage>
</organism>
<proteinExistence type="inferred from homology"/>
<protein>
    <recommendedName>
        <fullName evidence="1">Alanine--tRNA ligase</fullName>
        <ecNumber evidence="1">6.1.1.7</ecNumber>
    </recommendedName>
    <alternativeName>
        <fullName evidence="1">Alanyl-tRNA synthetase</fullName>
        <shortName evidence="1">AlaRS</shortName>
    </alternativeName>
</protein>
<comment type="function">
    <text evidence="1">Catalyzes the attachment of alanine to tRNA(Ala) in a two-step reaction: alanine is first activated by ATP to form Ala-AMP and then transferred to the acceptor end of tRNA(Ala). Also edits incorrectly charged Ser-tRNA(Ala) and Gly-tRNA(Ala) via its editing domain.</text>
</comment>
<comment type="catalytic activity">
    <reaction evidence="1">
        <text>tRNA(Ala) + L-alanine + ATP = L-alanyl-tRNA(Ala) + AMP + diphosphate</text>
        <dbReference type="Rhea" id="RHEA:12540"/>
        <dbReference type="Rhea" id="RHEA-COMP:9657"/>
        <dbReference type="Rhea" id="RHEA-COMP:9923"/>
        <dbReference type="ChEBI" id="CHEBI:30616"/>
        <dbReference type="ChEBI" id="CHEBI:33019"/>
        <dbReference type="ChEBI" id="CHEBI:57972"/>
        <dbReference type="ChEBI" id="CHEBI:78442"/>
        <dbReference type="ChEBI" id="CHEBI:78497"/>
        <dbReference type="ChEBI" id="CHEBI:456215"/>
        <dbReference type="EC" id="6.1.1.7"/>
    </reaction>
</comment>
<comment type="cofactor">
    <cofactor evidence="1">
        <name>Zn(2+)</name>
        <dbReference type="ChEBI" id="CHEBI:29105"/>
    </cofactor>
    <text evidence="1">Binds 1 zinc ion per subunit.</text>
</comment>
<comment type="subcellular location">
    <subcellularLocation>
        <location evidence="1">Cytoplasm</location>
    </subcellularLocation>
</comment>
<comment type="domain">
    <text evidence="1">Consists of three domains; the N-terminal catalytic domain, the editing domain and the C-terminal C-Ala domain. The editing domain removes incorrectly charged amino acids, while the C-Ala domain, along with tRNA(Ala), serves as a bridge to cooperatively bring together the editing and aminoacylation centers thus stimulating deacylation of misacylated tRNAs.</text>
</comment>
<comment type="similarity">
    <text evidence="1">Belongs to the class-II aminoacyl-tRNA synthetase family.</text>
</comment>
<keyword id="KW-0030">Aminoacyl-tRNA synthetase</keyword>
<keyword id="KW-0067">ATP-binding</keyword>
<keyword id="KW-0963">Cytoplasm</keyword>
<keyword id="KW-0436">Ligase</keyword>
<keyword id="KW-0479">Metal-binding</keyword>
<keyword id="KW-0547">Nucleotide-binding</keyword>
<keyword id="KW-0648">Protein biosynthesis</keyword>
<keyword id="KW-1185">Reference proteome</keyword>
<keyword id="KW-0694">RNA-binding</keyword>
<keyword id="KW-0820">tRNA-binding</keyword>
<keyword id="KW-0862">Zinc</keyword>
<reference key="1">
    <citation type="journal article" date="2007" name="PLoS Genet.">
        <title>Being pathogenic, plastic, and sexual while living with a nearly minimal bacterial genome.</title>
        <authorList>
            <person name="Sirand-Pugnet P."/>
            <person name="Lartigue C."/>
            <person name="Marenda M."/>
            <person name="Jacob D."/>
            <person name="Barre A."/>
            <person name="Barbe V."/>
            <person name="Schenowitz C."/>
            <person name="Mangenot S."/>
            <person name="Couloux A."/>
            <person name="Segurens B."/>
            <person name="de Daruvar A."/>
            <person name="Blanchard A."/>
            <person name="Citti C."/>
        </authorList>
    </citation>
    <scope>NUCLEOTIDE SEQUENCE [LARGE SCALE GENOMIC DNA]</scope>
    <source>
        <strain>NCTC 10123 / CIP 59.7 / PG2</strain>
    </source>
</reference>
<sequence>MKKLTSTEIRQKWLDFFESKNHLVIESKSLIPVNDSSLLWINSGVATLKNYFSGKKVPPAFRLTNSQKAIRTNDIENVGVTSRHHTFFEMLGNFSIGNYFKKEAIAYAKEFLVNVLEMDFEKLYFTYYEEDLEAKNYWLENGVDESHLISGTRDTNFWDLGSGPCGPCTEIFYDRGEKYDRRGLDLLKNDIENDRYIEIWNIVFSQFNNDGEGNYTELKQKNIDTGAGLERLASIMQDVPTNYDSDLFINIIREIEKYSPYKYVIENYFAKDEHQGEINTNFKIIADHIRTVVNAIADGAKVSNVGRGYIIRRLLRRSYYKGMQLGIKDLFLHKLVKVVKDSLPYEYNEKDVIDAIKEEELLFSKTIEKGKILLESFLDNENKVFDGAVAFNLLETYGFPIELTAEILHQKGISVDMDAFELAKEKHALASKGGKATGMDKVINSLALIDKKMDNFVGYSELSANSKVLKLFDEENEVEGFETGGYVLLETTPFYATSGGQRHDKGFIIQGENKIKIIDVFKDKFGNHIHFVEGKMNNHEPVSSFVDPNIRIGLERNHSGTHLLFCALRNVLGSHIEQLGSDNNEERLTFDFPADEKPSDEQIKAVEDLVRSYITKSIDREYITTTVDKAREMGAIMTLEEGEYMDPRAIRVVRFGDITSDLCGGTHLSNTSKLESFKITNVEKKQAGVFRIRAISSSKLVNEYLSKVNKKLNEELATIIKKIKELKSDYVAPAINENEPDIETLNASINKRIDELREVYKQLLKESSNLEFDYETVKFDKIKDYDVYINLDVDASAVKLIAASIRDKFQLGKTVAIIGSKNENELLLAIATRAIDANKMFKKLASELNGRGGGAPILAMGKMNYSEDIESLIKDYLPDA</sequence>
<evidence type="ECO:0000255" key="1">
    <source>
        <dbReference type="HAMAP-Rule" id="MF_00036"/>
    </source>
</evidence>
<gene>
    <name evidence="1" type="primary">alaS</name>
    <name type="ordered locus">MAG4160</name>
</gene>
<feature type="chain" id="PRO_0000347690" description="Alanine--tRNA ligase">
    <location>
        <begin position="1"/>
        <end position="880"/>
    </location>
</feature>
<feature type="binding site" evidence="1">
    <location>
        <position position="558"/>
    </location>
    <ligand>
        <name>Zn(2+)</name>
        <dbReference type="ChEBI" id="CHEBI:29105"/>
    </ligand>
</feature>
<feature type="binding site" evidence="1">
    <location>
        <position position="562"/>
    </location>
    <ligand>
        <name>Zn(2+)</name>
        <dbReference type="ChEBI" id="CHEBI:29105"/>
    </ligand>
</feature>
<feature type="binding site" evidence="1">
    <location>
        <position position="663"/>
    </location>
    <ligand>
        <name>Zn(2+)</name>
        <dbReference type="ChEBI" id="CHEBI:29105"/>
    </ligand>
</feature>
<feature type="binding site" evidence="1">
    <location>
        <position position="667"/>
    </location>
    <ligand>
        <name>Zn(2+)</name>
        <dbReference type="ChEBI" id="CHEBI:29105"/>
    </ligand>
</feature>
<name>SYA_MYCAP</name>
<dbReference type="EC" id="6.1.1.7" evidence="1"/>
<dbReference type="EMBL" id="CU179680">
    <property type="protein sequence ID" value="CAL59114.1"/>
    <property type="molecule type" value="Genomic_DNA"/>
</dbReference>
<dbReference type="RefSeq" id="WP_011949588.1">
    <property type="nucleotide sequence ID" value="NC_009497.1"/>
</dbReference>
<dbReference type="SMR" id="A5IYK5"/>
<dbReference type="STRING" id="347257.MAG4160"/>
<dbReference type="GeneID" id="93358165"/>
<dbReference type="KEGG" id="maa:MAG4160"/>
<dbReference type="HOGENOM" id="CLU_004485_1_1_14"/>
<dbReference type="Proteomes" id="UP000007065">
    <property type="component" value="Chromosome"/>
</dbReference>
<dbReference type="GO" id="GO:0005829">
    <property type="term" value="C:cytosol"/>
    <property type="evidence" value="ECO:0007669"/>
    <property type="project" value="TreeGrafter"/>
</dbReference>
<dbReference type="GO" id="GO:0004813">
    <property type="term" value="F:alanine-tRNA ligase activity"/>
    <property type="evidence" value="ECO:0007669"/>
    <property type="project" value="UniProtKB-UniRule"/>
</dbReference>
<dbReference type="GO" id="GO:0002161">
    <property type="term" value="F:aminoacyl-tRNA deacylase activity"/>
    <property type="evidence" value="ECO:0007669"/>
    <property type="project" value="TreeGrafter"/>
</dbReference>
<dbReference type="GO" id="GO:0005524">
    <property type="term" value="F:ATP binding"/>
    <property type="evidence" value="ECO:0007669"/>
    <property type="project" value="UniProtKB-UniRule"/>
</dbReference>
<dbReference type="GO" id="GO:0000049">
    <property type="term" value="F:tRNA binding"/>
    <property type="evidence" value="ECO:0007669"/>
    <property type="project" value="UniProtKB-KW"/>
</dbReference>
<dbReference type="GO" id="GO:0008270">
    <property type="term" value="F:zinc ion binding"/>
    <property type="evidence" value="ECO:0007669"/>
    <property type="project" value="UniProtKB-UniRule"/>
</dbReference>
<dbReference type="GO" id="GO:0006419">
    <property type="term" value="P:alanyl-tRNA aminoacylation"/>
    <property type="evidence" value="ECO:0007669"/>
    <property type="project" value="UniProtKB-UniRule"/>
</dbReference>
<dbReference type="CDD" id="cd00673">
    <property type="entry name" value="AlaRS_core"/>
    <property type="match status" value="1"/>
</dbReference>
<dbReference type="FunFam" id="3.30.930.10:FF:000046">
    <property type="entry name" value="Alanine--tRNA ligase"/>
    <property type="match status" value="1"/>
</dbReference>
<dbReference type="FunFam" id="3.30.980.10:FF:000004">
    <property type="entry name" value="Alanine--tRNA ligase, cytoplasmic"/>
    <property type="match status" value="1"/>
</dbReference>
<dbReference type="Gene3D" id="2.40.30.130">
    <property type="match status" value="1"/>
</dbReference>
<dbReference type="Gene3D" id="3.10.310.40">
    <property type="match status" value="1"/>
</dbReference>
<dbReference type="Gene3D" id="3.30.54.20">
    <property type="match status" value="1"/>
</dbReference>
<dbReference type="Gene3D" id="3.30.930.10">
    <property type="entry name" value="Bira Bifunctional Protein, Domain 2"/>
    <property type="match status" value="1"/>
</dbReference>
<dbReference type="Gene3D" id="3.30.980.10">
    <property type="entry name" value="Threonyl-trna Synthetase, Chain A, domain 2"/>
    <property type="match status" value="1"/>
</dbReference>
<dbReference type="HAMAP" id="MF_00036_B">
    <property type="entry name" value="Ala_tRNA_synth_B"/>
    <property type="match status" value="1"/>
</dbReference>
<dbReference type="InterPro" id="IPR045864">
    <property type="entry name" value="aa-tRNA-synth_II/BPL/LPL"/>
</dbReference>
<dbReference type="InterPro" id="IPR002318">
    <property type="entry name" value="Ala-tRNA-lgiase_IIc"/>
</dbReference>
<dbReference type="InterPro" id="IPR018162">
    <property type="entry name" value="Ala-tRNA-ligase_IIc_anticod-bd"/>
</dbReference>
<dbReference type="InterPro" id="IPR018165">
    <property type="entry name" value="Ala-tRNA-synth_IIc_core"/>
</dbReference>
<dbReference type="InterPro" id="IPR018164">
    <property type="entry name" value="Ala-tRNA-synth_IIc_N"/>
</dbReference>
<dbReference type="InterPro" id="IPR050058">
    <property type="entry name" value="Ala-tRNA_ligase"/>
</dbReference>
<dbReference type="InterPro" id="IPR023033">
    <property type="entry name" value="Ala_tRNA_ligase_euk/bac"/>
</dbReference>
<dbReference type="InterPro" id="IPR003156">
    <property type="entry name" value="DHHA1_dom"/>
</dbReference>
<dbReference type="InterPro" id="IPR018163">
    <property type="entry name" value="Thr/Ala-tRNA-synth_IIc_edit"/>
</dbReference>
<dbReference type="InterPro" id="IPR009000">
    <property type="entry name" value="Transl_B-barrel_sf"/>
</dbReference>
<dbReference type="InterPro" id="IPR012947">
    <property type="entry name" value="tRNA_SAD"/>
</dbReference>
<dbReference type="NCBIfam" id="TIGR00344">
    <property type="entry name" value="alaS"/>
    <property type="match status" value="1"/>
</dbReference>
<dbReference type="PANTHER" id="PTHR11777:SF9">
    <property type="entry name" value="ALANINE--TRNA LIGASE, CYTOPLASMIC"/>
    <property type="match status" value="1"/>
</dbReference>
<dbReference type="PANTHER" id="PTHR11777">
    <property type="entry name" value="ALANYL-TRNA SYNTHETASE"/>
    <property type="match status" value="1"/>
</dbReference>
<dbReference type="Pfam" id="PF02272">
    <property type="entry name" value="DHHA1"/>
    <property type="match status" value="1"/>
</dbReference>
<dbReference type="Pfam" id="PF01411">
    <property type="entry name" value="tRNA-synt_2c"/>
    <property type="match status" value="1"/>
</dbReference>
<dbReference type="Pfam" id="PF07973">
    <property type="entry name" value="tRNA_SAD"/>
    <property type="match status" value="1"/>
</dbReference>
<dbReference type="PRINTS" id="PR00980">
    <property type="entry name" value="TRNASYNTHALA"/>
</dbReference>
<dbReference type="SMART" id="SM00863">
    <property type="entry name" value="tRNA_SAD"/>
    <property type="match status" value="1"/>
</dbReference>
<dbReference type="SUPFAM" id="SSF55681">
    <property type="entry name" value="Class II aaRS and biotin synthetases"/>
    <property type="match status" value="1"/>
</dbReference>
<dbReference type="SUPFAM" id="SSF101353">
    <property type="entry name" value="Putative anticodon-binding domain of alanyl-tRNA synthetase (AlaRS)"/>
    <property type="match status" value="1"/>
</dbReference>
<dbReference type="SUPFAM" id="SSF55186">
    <property type="entry name" value="ThrRS/AlaRS common domain"/>
    <property type="match status" value="1"/>
</dbReference>
<dbReference type="SUPFAM" id="SSF50447">
    <property type="entry name" value="Translation proteins"/>
    <property type="match status" value="1"/>
</dbReference>
<dbReference type="PROSITE" id="PS50860">
    <property type="entry name" value="AA_TRNA_LIGASE_II_ALA"/>
    <property type="match status" value="1"/>
</dbReference>